<proteinExistence type="inferred from homology"/>
<name>GPMA_RHOOB</name>
<reference key="1">
    <citation type="submission" date="2009-03" db="EMBL/GenBank/DDBJ databases">
        <title>Comparison of the complete genome sequences of Rhodococcus erythropolis PR4 and Rhodococcus opacus B4.</title>
        <authorList>
            <person name="Takarada H."/>
            <person name="Sekine M."/>
            <person name="Hosoyama A."/>
            <person name="Yamada R."/>
            <person name="Fujisawa T."/>
            <person name="Omata S."/>
            <person name="Shimizu A."/>
            <person name="Tsukatani N."/>
            <person name="Tanikawa S."/>
            <person name="Fujita N."/>
            <person name="Harayama S."/>
        </authorList>
    </citation>
    <scope>NUCLEOTIDE SEQUENCE [LARGE SCALE GENOMIC DNA]</scope>
    <source>
        <strain>B4</strain>
    </source>
</reference>
<keyword id="KW-0312">Gluconeogenesis</keyword>
<keyword id="KW-0324">Glycolysis</keyword>
<keyword id="KW-0413">Isomerase</keyword>
<evidence type="ECO:0000255" key="1">
    <source>
        <dbReference type="HAMAP-Rule" id="MF_01039"/>
    </source>
</evidence>
<gene>
    <name evidence="1" type="primary">gpmA</name>
    <name type="ordered locus">ROP_17420</name>
</gene>
<accession>C1AZ61</accession>
<feature type="chain" id="PRO_1000149528" description="2,3-bisphosphoglycerate-dependent phosphoglycerate mutase">
    <location>
        <begin position="1"/>
        <end position="251"/>
    </location>
</feature>
<feature type="active site" description="Tele-phosphohistidine intermediate" evidence="1">
    <location>
        <position position="14"/>
    </location>
</feature>
<feature type="active site" description="Proton donor/acceptor" evidence="1">
    <location>
        <position position="92"/>
    </location>
</feature>
<feature type="binding site" evidence="1">
    <location>
        <begin position="13"/>
        <end position="20"/>
    </location>
    <ligand>
        <name>substrate</name>
    </ligand>
</feature>
<feature type="binding site" evidence="1">
    <location>
        <begin position="26"/>
        <end position="27"/>
    </location>
    <ligand>
        <name>substrate</name>
    </ligand>
</feature>
<feature type="binding site" evidence="1">
    <location>
        <position position="65"/>
    </location>
    <ligand>
        <name>substrate</name>
    </ligand>
</feature>
<feature type="binding site" evidence="1">
    <location>
        <begin position="92"/>
        <end position="95"/>
    </location>
    <ligand>
        <name>substrate</name>
    </ligand>
</feature>
<feature type="binding site" evidence="1">
    <location>
        <position position="103"/>
    </location>
    <ligand>
        <name>substrate</name>
    </ligand>
</feature>
<feature type="binding site" evidence="1">
    <location>
        <begin position="119"/>
        <end position="120"/>
    </location>
    <ligand>
        <name>substrate</name>
    </ligand>
</feature>
<feature type="binding site" evidence="1">
    <location>
        <begin position="186"/>
        <end position="187"/>
    </location>
    <ligand>
        <name>substrate</name>
    </ligand>
</feature>
<feature type="site" description="Transition state stabilizer" evidence="1">
    <location>
        <position position="185"/>
    </location>
</feature>
<sequence>MNGMSTGTLVLLRHGESEWNALNLFTGWVDVHLTDKGIAEGKRAGELLLEHNLLPDVLYTSLLRRAISTANIALDTADRHWIPVIRDWRLNERHYGALQGRNKAQVKDKYGDEQFMLWRRSYDTPPPTIEPGSEYSQDTDPRYANLDEVPLTECLKDVVVRLIPYWEDTISADLLAGKTVLITAHGNSLRALVKHLDGISDEDIAGLNIPTGIPLRYDLDENLKPLNPGGTYLDPEAAAAGAAAVANQGGK</sequence>
<organism>
    <name type="scientific">Rhodococcus opacus (strain B4)</name>
    <dbReference type="NCBI Taxonomy" id="632772"/>
    <lineage>
        <taxon>Bacteria</taxon>
        <taxon>Bacillati</taxon>
        <taxon>Actinomycetota</taxon>
        <taxon>Actinomycetes</taxon>
        <taxon>Mycobacteriales</taxon>
        <taxon>Nocardiaceae</taxon>
        <taxon>Rhodococcus</taxon>
    </lineage>
</organism>
<comment type="function">
    <text evidence="1">Catalyzes the interconversion of 2-phosphoglycerate and 3-phosphoglycerate.</text>
</comment>
<comment type="catalytic activity">
    <reaction evidence="1">
        <text>(2R)-2-phosphoglycerate = (2R)-3-phosphoglycerate</text>
        <dbReference type="Rhea" id="RHEA:15901"/>
        <dbReference type="ChEBI" id="CHEBI:58272"/>
        <dbReference type="ChEBI" id="CHEBI:58289"/>
        <dbReference type="EC" id="5.4.2.11"/>
    </reaction>
</comment>
<comment type="pathway">
    <text evidence="1">Carbohydrate degradation; glycolysis; pyruvate from D-glyceraldehyde 3-phosphate: step 3/5.</text>
</comment>
<comment type="similarity">
    <text evidence="1">Belongs to the phosphoglycerate mutase family. BPG-dependent PGAM subfamily.</text>
</comment>
<dbReference type="EC" id="5.4.2.11" evidence="1"/>
<dbReference type="EMBL" id="AP011115">
    <property type="protein sequence ID" value="BAH49989.1"/>
    <property type="molecule type" value="Genomic_DNA"/>
</dbReference>
<dbReference type="RefSeq" id="WP_012688948.1">
    <property type="nucleotide sequence ID" value="NC_012522.1"/>
</dbReference>
<dbReference type="SMR" id="C1AZ61"/>
<dbReference type="STRING" id="632772.ROP_17420"/>
<dbReference type="KEGG" id="rop:ROP_17420"/>
<dbReference type="PATRIC" id="fig|632772.20.peg.1826"/>
<dbReference type="HOGENOM" id="CLU_033323_1_1_11"/>
<dbReference type="UniPathway" id="UPA00109">
    <property type="reaction ID" value="UER00186"/>
</dbReference>
<dbReference type="Proteomes" id="UP000002212">
    <property type="component" value="Chromosome"/>
</dbReference>
<dbReference type="GO" id="GO:0004619">
    <property type="term" value="F:phosphoglycerate mutase activity"/>
    <property type="evidence" value="ECO:0007669"/>
    <property type="project" value="UniProtKB-EC"/>
</dbReference>
<dbReference type="GO" id="GO:0006094">
    <property type="term" value="P:gluconeogenesis"/>
    <property type="evidence" value="ECO:0007669"/>
    <property type="project" value="UniProtKB-UniRule"/>
</dbReference>
<dbReference type="GO" id="GO:0006096">
    <property type="term" value="P:glycolytic process"/>
    <property type="evidence" value="ECO:0007669"/>
    <property type="project" value="UniProtKB-UniRule"/>
</dbReference>
<dbReference type="CDD" id="cd07067">
    <property type="entry name" value="HP_PGM_like"/>
    <property type="match status" value="1"/>
</dbReference>
<dbReference type="FunFam" id="3.40.50.1240:FF:000012">
    <property type="entry name" value="Phosphoglycerate mutase 1"/>
    <property type="match status" value="1"/>
</dbReference>
<dbReference type="Gene3D" id="3.40.50.1240">
    <property type="entry name" value="Phosphoglycerate mutase-like"/>
    <property type="match status" value="1"/>
</dbReference>
<dbReference type="HAMAP" id="MF_01039">
    <property type="entry name" value="PGAM_GpmA"/>
    <property type="match status" value="1"/>
</dbReference>
<dbReference type="InterPro" id="IPR013078">
    <property type="entry name" value="His_Pase_superF_clade-1"/>
</dbReference>
<dbReference type="InterPro" id="IPR029033">
    <property type="entry name" value="His_PPase_superfam"/>
</dbReference>
<dbReference type="InterPro" id="IPR001345">
    <property type="entry name" value="PG/BPGM_mutase_AS"/>
</dbReference>
<dbReference type="InterPro" id="IPR005952">
    <property type="entry name" value="Phosphogly_mut1"/>
</dbReference>
<dbReference type="NCBIfam" id="TIGR01258">
    <property type="entry name" value="pgm_1"/>
    <property type="match status" value="1"/>
</dbReference>
<dbReference type="NCBIfam" id="NF010713">
    <property type="entry name" value="PRK14115.1"/>
    <property type="match status" value="1"/>
</dbReference>
<dbReference type="NCBIfam" id="NF010718">
    <property type="entry name" value="PRK14120.1"/>
    <property type="match status" value="1"/>
</dbReference>
<dbReference type="PANTHER" id="PTHR11931">
    <property type="entry name" value="PHOSPHOGLYCERATE MUTASE"/>
    <property type="match status" value="1"/>
</dbReference>
<dbReference type="Pfam" id="PF00300">
    <property type="entry name" value="His_Phos_1"/>
    <property type="match status" value="1"/>
</dbReference>
<dbReference type="PIRSF" id="PIRSF000709">
    <property type="entry name" value="6PFK_2-Ptase"/>
    <property type="match status" value="1"/>
</dbReference>
<dbReference type="SMART" id="SM00855">
    <property type="entry name" value="PGAM"/>
    <property type="match status" value="1"/>
</dbReference>
<dbReference type="SUPFAM" id="SSF53254">
    <property type="entry name" value="Phosphoglycerate mutase-like"/>
    <property type="match status" value="1"/>
</dbReference>
<dbReference type="PROSITE" id="PS00175">
    <property type="entry name" value="PG_MUTASE"/>
    <property type="match status" value="1"/>
</dbReference>
<protein>
    <recommendedName>
        <fullName evidence="1">2,3-bisphosphoglycerate-dependent phosphoglycerate mutase</fullName>
        <shortName evidence="1">BPG-dependent PGAM</shortName>
        <shortName evidence="1">PGAM</shortName>
        <shortName evidence="1">Phosphoglyceromutase</shortName>
        <shortName evidence="1">dPGM</shortName>
        <ecNumber evidence="1">5.4.2.11</ecNumber>
    </recommendedName>
</protein>